<protein>
    <recommendedName>
        <fullName>Coiled-coil domain-containing protein 22</fullName>
    </recommendedName>
</protein>
<evidence type="ECO:0000250" key="1">
    <source>
        <dbReference type="UniProtKB" id="Q9JIG7"/>
    </source>
</evidence>
<evidence type="ECO:0000256" key="2">
    <source>
        <dbReference type="SAM" id="MobiDB-lite"/>
    </source>
</evidence>
<evidence type="ECO:0000269" key="3">
    <source>
    </source>
</evidence>
<evidence type="ECO:0000269" key="4">
    <source>
    </source>
</evidence>
<evidence type="ECO:0000269" key="5">
    <source>
    </source>
</evidence>
<evidence type="ECO:0000269" key="6">
    <source>
    </source>
</evidence>
<evidence type="ECO:0000269" key="7">
    <source>
    </source>
</evidence>
<evidence type="ECO:0000269" key="8">
    <source>
    </source>
</evidence>
<evidence type="ECO:0000269" key="9">
    <source>
    </source>
</evidence>
<evidence type="ECO:0000269" key="10">
    <source>
    </source>
</evidence>
<evidence type="ECO:0000269" key="11">
    <source>
    </source>
</evidence>
<evidence type="ECO:0000305" key="12"/>
<evidence type="ECO:0000305" key="13">
    <source>
    </source>
</evidence>
<evidence type="ECO:0007744" key="14">
    <source>
        <dbReference type="PDB" id="8F2U"/>
    </source>
</evidence>
<evidence type="ECO:0007744" key="15">
    <source>
        <dbReference type="PDB" id="8P0V"/>
    </source>
</evidence>
<evidence type="ECO:0007744" key="16">
    <source>
        <dbReference type="PDB" id="8P0W"/>
    </source>
</evidence>
<evidence type="ECO:0007744" key="17">
    <source>
        <dbReference type="PDB" id="8P0X"/>
    </source>
</evidence>
<evidence type="ECO:0007744" key="18">
    <source>
    </source>
</evidence>
<evidence type="ECO:0007829" key="19">
    <source>
        <dbReference type="PDB" id="8P0W"/>
    </source>
</evidence>
<name>CCD22_HUMAN</name>
<comment type="function">
    <text evidence="5 7 9 10 11">Component of the commander complex that is essential for endosomal recycling of transmembrane cargos; the Commander complex is composed of composed of the CCC subcomplex and the retriever subcomplex (PubMed:37172566, PubMed:38459129). Component of the CCC complex, which is involved in the regulation of endosomal recycling of surface proteins, including integrins, signaling receptor and channels (PubMed:37172566, PubMed:38459129). Involved in regulation of NF-kappa-B signaling (PubMed:23563313). Promotes ubiquitination of I-kappa-B-kinase subunit IKBKB and its subsequent proteasomal degradation leading to NF-kappa-B activation; the function may involve association with COMMD8 and a CUL1-dependent E3 ubiquitin ligase complex (PubMed:23563313). May down-regulate NF-kappa-B activity via association with COMMD1 and involving a CUL2-dependent E3 ubiquitin ligase complex. Regulates the cellular localization of COMM domain-containing proteins, such as COMMD1 and COMMD10 (PubMed:23563313). Component of the CCC complex, which is involved in the regulation of endosomal recycling of surface proteins, including integrins, signaling receptor and channels. The CCC complex associates with SNX17, retriever and WASH complexes to prevent lysosomal degradation and promote cell surface recycling of numerous cargos such as integrins ITGA5:ITGB1 (PubMed:25355947, PubMed:28892079). Plays a role in copper ion homeostasis (PubMed:25355947). Involved in copper-dependent ATP7A trafficking between the trans-Golgi network and vesicles in the cell periphery; the function is proposed to depend on its association within the CCC complex and cooperation with the WASH complex on early endosomes (PubMed:25355947).</text>
</comment>
<comment type="function">
    <text evidence="9">(Microbial infection) The CCC complex, in collaboration with the heterotrimeric retriever complex, mediates the exit of human papillomavirus to the cell surface.</text>
</comment>
<comment type="subunit">
    <text evidence="1 5 7 9 10 11">Component of the commander complex consisting of the CCC subcomplex and the retriever subcomplex (PubMed:37172566, PubMed:38459129, PubMed:25355947, PubMed:28892079). Component of the CCC (COMMD/CCDC22/CCDC93) subcomplex consisting of COMMD1, COMMD2, COMMD3, COMMD4, COMMD5, COMMD6, COMMD7, COMMD8, COMMD9, COMMD10, CCDC22 and CCDC93 (PubMed:37172566, PubMed:38459129, PubMed:25355947, PubMed:28892079). Forms a coiled-coil heterodimer with CCDC22; this heterodimer interacts with the guanine nucleotide exchange factor DENND10; the interaction is direct (PubMed:37172566, PubMed:38459129). Interacts with CUL1, CUL2, CUL3, SKP1, BTRC (PubMed:23563313). Interacts with SNX17 and SNX31 (PubMed:28892079). Interacts with CPNE1 and CPNE4 (By similarity).</text>
</comment>
<comment type="interaction">
    <interactant intactId="EBI-3943153">
        <id>O60826</id>
    </interactant>
    <interactant intactId="EBI-351292">
        <id>P63261</id>
        <label>ACTG1</label>
    </interactant>
    <organismsDiffer>false</organismsDiffer>
    <experiments>3</experiments>
</comment>
<comment type="interaction">
    <interactant intactId="EBI-3943153">
        <id>O60826</id>
    </interactant>
    <interactant intactId="EBI-2117357">
        <id>P15289</id>
        <label>ARSA</label>
    </interactant>
    <organismsDiffer>false</organismsDiffer>
    <experiments>3</experiments>
</comment>
<comment type="interaction">
    <interactant intactId="EBI-3943153">
        <id>O60826</id>
    </interactant>
    <interactant intactId="EBI-1104769">
        <id>Q567U6</id>
        <label>CCDC93</label>
    </interactant>
    <organismsDiffer>false</organismsDiffer>
    <experiments>30</experiments>
</comment>
<comment type="interaction">
    <interactant intactId="EBI-3943153">
        <id>O60826</id>
    </interactant>
    <interactant intactId="EBI-1550112">
        <id>Q8N668</id>
        <label>COMMD1</label>
    </interactant>
    <organismsDiffer>false</organismsDiffer>
    <experiments>34</experiments>
</comment>
<comment type="interaction">
    <interactant intactId="EBI-3943153">
        <id>O60826</id>
    </interactant>
    <interactant intactId="EBI-1550310">
        <id>Q9Y6G5</id>
        <label>COMMD10</label>
    </interactant>
    <organismsDiffer>false</organismsDiffer>
    <experiments>15</experiments>
</comment>
<comment type="interaction">
    <interactant intactId="EBI-3943153">
        <id>O60826</id>
    </interactant>
    <interactant intactId="EBI-1550220">
        <id>Q86X83</id>
        <label>COMMD2</label>
    </interactant>
    <organismsDiffer>false</organismsDiffer>
    <experiments>14</experiments>
</comment>
<comment type="interaction">
    <interactant intactId="EBI-3943153">
        <id>O60826</id>
    </interactant>
    <interactant intactId="EBI-714979">
        <id>Q9UBI1</id>
        <label>COMMD3</label>
    </interactant>
    <organismsDiffer>false</organismsDiffer>
    <experiments>13</experiments>
</comment>
<comment type="interaction">
    <interactant intactId="EBI-3943153">
        <id>O60826</id>
    </interactant>
    <interactant intactId="EBI-1550064">
        <id>Q9H0A8</id>
        <label>COMMD4</label>
    </interactant>
    <organismsDiffer>false</organismsDiffer>
    <experiments>13</experiments>
</comment>
<comment type="interaction">
    <interactant intactId="EBI-3943153">
        <id>O60826</id>
    </interactant>
    <interactant intactId="EBI-1550256">
        <id>Q9GZQ3</id>
        <label>COMMD5</label>
    </interactant>
    <organismsDiffer>false</organismsDiffer>
    <experiments>13</experiments>
</comment>
<comment type="interaction">
    <interactant intactId="EBI-3943153">
        <id>O60826</id>
    </interactant>
    <interactant intactId="EBI-1550081">
        <id>Q7Z4G1</id>
        <label>COMMD6</label>
    </interactant>
    <organismsDiffer>false</organismsDiffer>
    <experiments>15</experiments>
</comment>
<comment type="interaction">
    <interactant intactId="EBI-3943153">
        <id>O60826</id>
    </interactant>
    <interactant intactId="EBI-1550280">
        <id>Q86VX2</id>
        <label>COMMD7</label>
    </interactant>
    <organismsDiffer>false</organismsDiffer>
    <experiments>10</experiments>
</comment>
<comment type="interaction">
    <interactant intactId="EBI-3943153">
        <id>O60826</id>
    </interactant>
    <interactant intactId="EBI-725694">
        <id>Q9NX08</id>
        <label>COMMD8</label>
    </interactant>
    <organismsDiffer>false</organismsDiffer>
    <experiments>11</experiments>
</comment>
<comment type="interaction">
    <interactant intactId="EBI-3943153">
        <id>O60826</id>
    </interactant>
    <interactant intactId="EBI-1550510">
        <id>Q9P000</id>
        <label>COMMD9</label>
    </interactant>
    <organismsDiffer>false</organismsDiffer>
    <experiments>15</experiments>
</comment>
<comment type="interaction">
    <interactant intactId="EBI-3943153">
        <id>O60826</id>
    </interactant>
    <interactant intactId="EBI-359390">
        <id>Q13616</id>
        <label>CUL1</label>
    </interactant>
    <organismsDiffer>false</organismsDiffer>
    <experiments>3</experiments>
</comment>
<comment type="interaction">
    <interactant intactId="EBI-3943153">
        <id>O60826</id>
    </interactant>
    <interactant intactId="EBI-456129">
        <id>Q13618</id>
        <label>CUL3</label>
    </interactant>
    <organismsDiffer>false</organismsDiffer>
    <experiments>2</experiments>
</comment>
<comment type="interaction">
    <interactant intactId="EBI-3943153">
        <id>O60826</id>
    </interactant>
    <interactant intactId="EBI-3044087">
        <id>Q7Z3Y8</id>
        <label>KRT27</label>
    </interactant>
    <organismsDiffer>false</organismsDiffer>
    <experiments>3</experiments>
</comment>
<comment type="interaction">
    <interactant intactId="EBI-3943153">
        <id>O60826</id>
    </interactant>
    <interactant intactId="EBI-536879">
        <id>O43482</id>
        <label>OIP5</label>
    </interactant>
    <organismsDiffer>false</organismsDiffer>
    <experiments>3</experiments>
</comment>
<comment type="interaction">
    <interactant intactId="EBI-3943153">
        <id>O60826</id>
    </interactant>
    <interactant intactId="EBI-739895">
        <id>Q8N6Y0</id>
        <label>USHBP1</label>
    </interactant>
    <organismsDiffer>false</organismsDiffer>
    <experiments>3</experiments>
</comment>
<comment type="interaction">
    <interactant intactId="EBI-3943153">
        <id>O60826</id>
    </interactant>
    <interactant intactId="EBI-2870155">
        <id>Q641Q2</id>
        <label>WASHC2A</label>
    </interactant>
    <organismsDiffer>false</organismsDiffer>
    <experiments>6</experiments>
</comment>
<comment type="interaction">
    <interactant intactId="EBI-3943153">
        <id>O60826</id>
    </interactant>
    <interactant intactId="EBI-25492395">
        <id>PRO_0000449633</id>
        <label>rep</label>
        <dbReference type="UniProtKB" id="P0DTD1"/>
    </interactant>
    <organismsDiffer>true</organismsDiffer>
    <experiments>3</experiments>
</comment>
<comment type="subcellular location">
    <subcellularLocation>
        <location evidence="13">Endosome</location>
    </subcellularLocation>
    <subcellularLocation>
        <location evidence="8">Cytoplasm</location>
        <location evidence="8">Cytoskeleton</location>
        <location evidence="8">Microtubule organizing center</location>
        <location evidence="8">Centrosome</location>
    </subcellularLocation>
</comment>
<comment type="tissue specificity">
    <text evidence="3">Widely expressed in adult tissues and in fetal liver and brain, with highest levels in prostate and lowest in skeletal muscle.</text>
</comment>
<comment type="disease" evidence="3 5 6">
    <disease id="DI-04573">
        <name>Ritscher-Schinzel syndrome 2</name>
        <acronym>RTSC2</acronym>
        <description>A form of Ritscher-Schinzel syndrome, a developmental malformation syndrome characterized by cerebellar brain malformations, congenital heart defects, and craniofacial abnormalities. RTSC2 is an X-linked recessive form characterized by intellectual disability associated with posterior fossa defects, cardiac malformations, and minor abnormalities of the face and distal extremities.</description>
        <dbReference type="MIM" id="300963"/>
    </disease>
    <text>The disease is caused by variants affecting the gene represented in this entry.</text>
</comment>
<comment type="similarity">
    <text evidence="12">Belongs to the CCDC22 family.</text>
</comment>
<feature type="chain" id="PRO_0000076199" description="Coiled-coil domain-containing protein 22">
    <location>
        <begin position="1"/>
        <end position="627"/>
    </location>
</feature>
<feature type="region of interest" description="Sufficicient and required for interaction with CCDC93" evidence="7">
    <location>
        <begin position="1"/>
        <end position="447"/>
    </location>
</feature>
<feature type="region of interest" description="Sufficient for interaction with COMMD1" evidence="7">
    <location>
        <begin position="1"/>
        <end position="321"/>
    </location>
</feature>
<feature type="region of interest" description="Disordered" evidence="2">
    <location>
        <begin position="218"/>
        <end position="243"/>
    </location>
</feature>
<feature type="coiled-coil region" evidence="11 15">
    <location>
        <begin position="320"/>
        <end position="627"/>
    </location>
</feature>
<feature type="compositionally biased region" description="Basic and acidic residues" evidence="2">
    <location>
        <begin position="219"/>
        <end position="230"/>
    </location>
</feature>
<feature type="modified residue" description="Phosphoserine" evidence="18">
    <location>
        <position position="410"/>
    </location>
</feature>
<feature type="sequence variant" id="VAR_065912" description="In RTSC2; may affect splicing and/or have a negative impact on transcription efficiency; results in decreased interaction with COMMD1; dbSNP:rs863225428." evidence="3 5">
    <original>T</original>
    <variation>A</variation>
    <location>
        <position position="17"/>
    </location>
</feature>
<feature type="sequence variant" id="VAR_076265" description="In dbSNP:rs147222955." evidence="4">
    <original>D</original>
    <variation>N</variation>
    <location>
        <position position="546"/>
    </location>
</feature>
<feature type="sequence variant" id="VAR_075063" description="In RTSC2; dbSNP:rs863225429." evidence="6">
    <original>Y</original>
    <variation>C</variation>
    <location>
        <position position="557"/>
    </location>
</feature>
<feature type="sequence conflict" description="In Ref. 2; BAF84665." evidence="12" ref="2">
    <original>Q</original>
    <variation>R</variation>
    <location>
        <position position="412"/>
    </location>
</feature>
<feature type="helix" evidence="19">
    <location>
        <begin position="121"/>
        <end position="138"/>
    </location>
</feature>
<feature type="helix" evidence="19">
    <location>
        <begin position="145"/>
        <end position="147"/>
    </location>
</feature>
<feature type="helix" evidence="19">
    <location>
        <begin position="150"/>
        <end position="155"/>
    </location>
</feature>
<feature type="helix" evidence="19">
    <location>
        <begin position="179"/>
        <end position="184"/>
    </location>
</feature>
<feature type="helix" evidence="19">
    <location>
        <begin position="192"/>
        <end position="195"/>
    </location>
</feature>
<feature type="strand" evidence="19">
    <location>
        <begin position="196"/>
        <end position="198"/>
    </location>
</feature>
<feature type="helix" evidence="19">
    <location>
        <begin position="199"/>
        <end position="217"/>
    </location>
</feature>
<feature type="helix" evidence="19">
    <location>
        <begin position="242"/>
        <end position="260"/>
    </location>
</feature>
<feature type="helix" evidence="19">
    <location>
        <begin position="261"/>
        <end position="263"/>
    </location>
</feature>
<feature type="helix" evidence="19">
    <location>
        <begin position="292"/>
        <end position="300"/>
    </location>
</feature>
<dbReference type="EMBL" id="AJ005890">
    <property type="protein sequence ID" value="CAA06747.1"/>
    <property type="molecule type" value="mRNA"/>
</dbReference>
<dbReference type="EMBL" id="AK291976">
    <property type="protein sequence ID" value="BAF84665.1"/>
    <property type="molecule type" value="mRNA"/>
</dbReference>
<dbReference type="EMBL" id="BC000972">
    <property type="protein sequence ID" value="AAH00972.1"/>
    <property type="molecule type" value="mRNA"/>
</dbReference>
<dbReference type="EMBL" id="BC011675">
    <property type="protein sequence ID" value="AAH11675.1"/>
    <property type="molecule type" value="mRNA"/>
</dbReference>
<dbReference type="CCDS" id="CCDS14322.1"/>
<dbReference type="RefSeq" id="NP_054727.1">
    <property type="nucleotide sequence ID" value="NM_014008.5"/>
</dbReference>
<dbReference type="RefSeq" id="XP_054182887.1">
    <property type="nucleotide sequence ID" value="XM_054326912.1"/>
</dbReference>
<dbReference type="PDB" id="8F2U">
    <property type="method" value="EM"/>
    <property type="resolution" value="3.53 A"/>
    <property type="chains" value="T=1-627"/>
</dbReference>
<dbReference type="PDB" id="8P0V">
    <property type="method" value="EM"/>
    <property type="resolution" value="6.50 A"/>
    <property type="chains" value="L=1-627"/>
</dbReference>
<dbReference type="PDB" id="8P0W">
    <property type="method" value="EM"/>
    <property type="resolution" value="2.90 A"/>
    <property type="chains" value="L=1-627"/>
</dbReference>
<dbReference type="PDB" id="8P0X">
    <property type="method" value="EM"/>
    <property type="resolution" value="7.50 A"/>
    <property type="chains" value="L=1-627"/>
</dbReference>
<dbReference type="PDBsum" id="8F2U"/>
<dbReference type="PDBsum" id="8P0V"/>
<dbReference type="PDBsum" id="8P0W"/>
<dbReference type="PDBsum" id="8P0X"/>
<dbReference type="EMDB" id="EMD-17339"/>
<dbReference type="EMDB" id="EMD-17340"/>
<dbReference type="EMDB" id="EMD-17341"/>
<dbReference type="EMDB" id="EMD-17342"/>
<dbReference type="EMDB" id="EMD-28827"/>
<dbReference type="SMR" id="O60826"/>
<dbReference type="BioGRID" id="118780">
    <property type="interactions" value="155"/>
</dbReference>
<dbReference type="ComplexPortal" id="CPX-2211">
    <property type="entry name" value="Commander complex"/>
</dbReference>
<dbReference type="CORUM" id="O60826"/>
<dbReference type="FunCoup" id="O60826">
    <property type="interactions" value="1495"/>
</dbReference>
<dbReference type="IntAct" id="O60826">
    <property type="interactions" value="109"/>
</dbReference>
<dbReference type="MINT" id="O60826"/>
<dbReference type="STRING" id="9606.ENSP00000365401"/>
<dbReference type="TCDB" id="9.A.3.1.2">
    <property type="family name" value="the sorting nexin27 (snx27)-retromer assembly apparatus (retromeraa) family"/>
</dbReference>
<dbReference type="GlyCosmos" id="O60826">
    <property type="glycosylation" value="2 sites, 1 glycan"/>
</dbReference>
<dbReference type="GlyGen" id="O60826">
    <property type="glycosylation" value="2 sites, 1 O-linked glycan (2 sites)"/>
</dbReference>
<dbReference type="iPTMnet" id="O60826"/>
<dbReference type="PhosphoSitePlus" id="O60826"/>
<dbReference type="SwissPalm" id="O60826"/>
<dbReference type="BioMuta" id="CCDC22"/>
<dbReference type="jPOST" id="O60826"/>
<dbReference type="MassIVE" id="O60826"/>
<dbReference type="PaxDb" id="9606-ENSP00000365401"/>
<dbReference type="PeptideAtlas" id="O60826"/>
<dbReference type="ProteomicsDB" id="49610"/>
<dbReference type="Pumba" id="O60826"/>
<dbReference type="Antibodypedia" id="368">
    <property type="antibodies" value="193 antibodies from 30 providers"/>
</dbReference>
<dbReference type="DNASU" id="28952"/>
<dbReference type="Ensembl" id="ENST00000376227.4">
    <property type="protein sequence ID" value="ENSP00000365401.3"/>
    <property type="gene ID" value="ENSG00000101997.13"/>
</dbReference>
<dbReference type="GeneID" id="28952"/>
<dbReference type="KEGG" id="hsa:28952"/>
<dbReference type="MANE-Select" id="ENST00000376227.4">
    <property type="protein sequence ID" value="ENSP00000365401.3"/>
    <property type="RefSeq nucleotide sequence ID" value="NM_014008.5"/>
    <property type="RefSeq protein sequence ID" value="NP_054727.1"/>
</dbReference>
<dbReference type="UCSC" id="uc004dnd.2">
    <property type="organism name" value="human"/>
</dbReference>
<dbReference type="AGR" id="HGNC:28909"/>
<dbReference type="CTD" id="28952"/>
<dbReference type="DisGeNET" id="28952"/>
<dbReference type="GeneCards" id="CCDC22"/>
<dbReference type="GeneReviews" id="CCDC22"/>
<dbReference type="HGNC" id="HGNC:28909">
    <property type="gene designation" value="CCDC22"/>
</dbReference>
<dbReference type="HPA" id="ENSG00000101997">
    <property type="expression patterns" value="Low tissue specificity"/>
</dbReference>
<dbReference type="MalaCards" id="CCDC22"/>
<dbReference type="MIM" id="300859">
    <property type="type" value="gene"/>
</dbReference>
<dbReference type="MIM" id="300963">
    <property type="type" value="phenotype"/>
</dbReference>
<dbReference type="neXtProt" id="NX_O60826"/>
<dbReference type="OpenTargets" id="ENSG00000101997"/>
<dbReference type="Orphanet" id="7">
    <property type="disease" value="3C syndrome"/>
</dbReference>
<dbReference type="PharmGKB" id="PA134947763"/>
<dbReference type="VEuPathDB" id="HostDB:ENSG00000101997"/>
<dbReference type="eggNOG" id="KOG1937">
    <property type="taxonomic scope" value="Eukaryota"/>
</dbReference>
<dbReference type="GeneTree" id="ENSGT00390000003809"/>
<dbReference type="HOGENOM" id="CLU_024231_1_0_1"/>
<dbReference type="InParanoid" id="O60826"/>
<dbReference type="OMA" id="KFEQHIQ"/>
<dbReference type="OrthoDB" id="10266736at2759"/>
<dbReference type="PAN-GO" id="O60826">
    <property type="GO annotations" value="2 GO annotations based on evolutionary models"/>
</dbReference>
<dbReference type="PhylomeDB" id="O60826"/>
<dbReference type="TreeFam" id="TF325575"/>
<dbReference type="PathwayCommons" id="O60826"/>
<dbReference type="Reactome" id="R-HSA-8951664">
    <property type="pathway name" value="Neddylation"/>
</dbReference>
<dbReference type="SignaLink" id="O60826"/>
<dbReference type="BioGRID-ORCS" id="28952">
    <property type="hits" value="49 hits in 794 CRISPR screens"/>
</dbReference>
<dbReference type="CD-CODE" id="FB4E32DD">
    <property type="entry name" value="Presynaptic clusters and postsynaptic densities"/>
</dbReference>
<dbReference type="GenomeRNAi" id="28952"/>
<dbReference type="Pharos" id="O60826">
    <property type="development level" value="Tbio"/>
</dbReference>
<dbReference type="PRO" id="PR:O60826"/>
<dbReference type="Proteomes" id="UP000005640">
    <property type="component" value="Chromosome X"/>
</dbReference>
<dbReference type="RNAct" id="O60826">
    <property type="molecule type" value="protein"/>
</dbReference>
<dbReference type="Bgee" id="ENSG00000101997">
    <property type="expression patterns" value="Expressed in granulocyte and 178 other cell types or tissues"/>
</dbReference>
<dbReference type="ExpressionAtlas" id="O60826">
    <property type="expression patterns" value="baseline and differential"/>
</dbReference>
<dbReference type="GO" id="GO:0005813">
    <property type="term" value="C:centrosome"/>
    <property type="evidence" value="ECO:0000314"/>
    <property type="project" value="UniProtKB"/>
</dbReference>
<dbReference type="GO" id="GO:0005829">
    <property type="term" value="C:cytosol"/>
    <property type="evidence" value="ECO:0000304"/>
    <property type="project" value="Reactome"/>
</dbReference>
<dbReference type="GO" id="GO:0005768">
    <property type="term" value="C:endosome"/>
    <property type="evidence" value="ECO:0007669"/>
    <property type="project" value="UniProtKB-SubCell"/>
</dbReference>
<dbReference type="GO" id="GO:0005654">
    <property type="term" value="C:nucleoplasm"/>
    <property type="evidence" value="ECO:0000304"/>
    <property type="project" value="Reactome"/>
</dbReference>
<dbReference type="GO" id="GO:0097602">
    <property type="term" value="F:cullin family protein binding"/>
    <property type="evidence" value="ECO:0000314"/>
    <property type="project" value="UniProtKB"/>
</dbReference>
<dbReference type="GO" id="GO:0032456">
    <property type="term" value="P:endocytic recycling"/>
    <property type="evidence" value="ECO:0000315"/>
    <property type="project" value="UniProtKB"/>
</dbReference>
<dbReference type="GO" id="GO:0006893">
    <property type="term" value="P:Golgi to plasma membrane transport"/>
    <property type="evidence" value="ECO:0000315"/>
    <property type="project" value="UniProtKB"/>
</dbReference>
<dbReference type="GO" id="GO:0006878">
    <property type="term" value="P:intracellular copper ion homeostasis"/>
    <property type="evidence" value="ECO:0000315"/>
    <property type="project" value="UniProtKB"/>
</dbReference>
<dbReference type="GO" id="GO:0043124">
    <property type="term" value="P:negative regulation of canonical NF-kappaB signal transduction"/>
    <property type="evidence" value="ECO:0000315"/>
    <property type="project" value="UniProtKB"/>
</dbReference>
<dbReference type="GO" id="GO:0043123">
    <property type="term" value="P:positive regulation of canonical NF-kappaB signal transduction"/>
    <property type="evidence" value="ECO:0000315"/>
    <property type="project" value="UniProtKB"/>
</dbReference>
<dbReference type="GO" id="GO:2000060">
    <property type="term" value="P:positive regulation of ubiquitin-dependent protein catabolic process"/>
    <property type="evidence" value="ECO:0000315"/>
    <property type="project" value="UniProtKB"/>
</dbReference>
<dbReference type="GO" id="GO:0015031">
    <property type="term" value="P:protein transport"/>
    <property type="evidence" value="ECO:0007669"/>
    <property type="project" value="UniProtKB-KW"/>
</dbReference>
<dbReference type="InterPro" id="IPR008530">
    <property type="entry name" value="CCDC22"/>
</dbReference>
<dbReference type="InterPro" id="IPR048348">
    <property type="entry name" value="CCDC22_CC"/>
</dbReference>
<dbReference type="InterPro" id="IPR048349">
    <property type="entry name" value="CCDC22_N"/>
</dbReference>
<dbReference type="PANTHER" id="PTHR15668:SF4">
    <property type="entry name" value="COILED-COIL DOMAIN-CONTAINING PROTEIN 22"/>
    <property type="match status" value="1"/>
</dbReference>
<dbReference type="PANTHER" id="PTHR15668">
    <property type="entry name" value="JM1 PROTEIN"/>
    <property type="match status" value="1"/>
</dbReference>
<dbReference type="Pfam" id="PF05667">
    <property type="entry name" value="CCDC22_CC"/>
    <property type="match status" value="1"/>
</dbReference>
<dbReference type="Pfam" id="PF21674">
    <property type="entry name" value="CCDC22_N"/>
    <property type="match status" value="1"/>
</dbReference>
<accession>O60826</accession>
<accession>A8K7G1</accession>
<gene>
    <name type="primary">CCDC22</name>
    <name type="synonym">CXorf37</name>
    <name type="ORF">JM1</name>
</gene>
<proteinExistence type="evidence at protein level"/>
<reference key="1">
    <citation type="submission" date="1998-04" db="EMBL/GenBank/DDBJ databases">
        <title>Transcription map in Xp11.23.</title>
        <authorList>
            <person name="Strom T.M."/>
            <person name="Nyakatura G."/>
            <person name="Hellebrand H."/>
            <person name="Drescher B."/>
            <person name="Rosenthal A."/>
            <person name="Meindl A."/>
        </authorList>
    </citation>
    <scope>NUCLEOTIDE SEQUENCE [LARGE SCALE MRNA]</scope>
    <source>
        <tissue>Peripheral blood leukocyte</tissue>
    </source>
</reference>
<reference key="2">
    <citation type="journal article" date="2004" name="Nat. Genet.">
        <title>Complete sequencing and characterization of 21,243 full-length human cDNAs.</title>
        <authorList>
            <person name="Ota T."/>
            <person name="Suzuki Y."/>
            <person name="Nishikawa T."/>
            <person name="Otsuki T."/>
            <person name="Sugiyama T."/>
            <person name="Irie R."/>
            <person name="Wakamatsu A."/>
            <person name="Hayashi K."/>
            <person name="Sato H."/>
            <person name="Nagai K."/>
            <person name="Kimura K."/>
            <person name="Makita H."/>
            <person name="Sekine M."/>
            <person name="Obayashi M."/>
            <person name="Nishi T."/>
            <person name="Shibahara T."/>
            <person name="Tanaka T."/>
            <person name="Ishii S."/>
            <person name="Yamamoto J."/>
            <person name="Saito K."/>
            <person name="Kawai Y."/>
            <person name="Isono Y."/>
            <person name="Nakamura Y."/>
            <person name="Nagahari K."/>
            <person name="Murakami K."/>
            <person name="Yasuda T."/>
            <person name="Iwayanagi T."/>
            <person name="Wagatsuma M."/>
            <person name="Shiratori A."/>
            <person name="Sudo H."/>
            <person name="Hosoiri T."/>
            <person name="Kaku Y."/>
            <person name="Kodaira H."/>
            <person name="Kondo H."/>
            <person name="Sugawara M."/>
            <person name="Takahashi M."/>
            <person name="Kanda K."/>
            <person name="Yokoi T."/>
            <person name="Furuya T."/>
            <person name="Kikkawa E."/>
            <person name="Omura Y."/>
            <person name="Abe K."/>
            <person name="Kamihara K."/>
            <person name="Katsuta N."/>
            <person name="Sato K."/>
            <person name="Tanikawa M."/>
            <person name="Yamazaki M."/>
            <person name="Ninomiya K."/>
            <person name="Ishibashi T."/>
            <person name="Yamashita H."/>
            <person name="Murakawa K."/>
            <person name="Fujimori K."/>
            <person name="Tanai H."/>
            <person name="Kimata M."/>
            <person name="Watanabe M."/>
            <person name="Hiraoka S."/>
            <person name="Chiba Y."/>
            <person name="Ishida S."/>
            <person name="Ono Y."/>
            <person name="Takiguchi S."/>
            <person name="Watanabe S."/>
            <person name="Yosida M."/>
            <person name="Hotuta T."/>
            <person name="Kusano J."/>
            <person name="Kanehori K."/>
            <person name="Takahashi-Fujii A."/>
            <person name="Hara H."/>
            <person name="Tanase T.-O."/>
            <person name="Nomura Y."/>
            <person name="Togiya S."/>
            <person name="Komai F."/>
            <person name="Hara R."/>
            <person name="Takeuchi K."/>
            <person name="Arita M."/>
            <person name="Imose N."/>
            <person name="Musashino K."/>
            <person name="Yuuki H."/>
            <person name="Oshima A."/>
            <person name="Sasaki N."/>
            <person name="Aotsuka S."/>
            <person name="Yoshikawa Y."/>
            <person name="Matsunawa H."/>
            <person name="Ichihara T."/>
            <person name="Shiohata N."/>
            <person name="Sano S."/>
            <person name="Moriya S."/>
            <person name="Momiyama H."/>
            <person name="Satoh N."/>
            <person name="Takami S."/>
            <person name="Terashima Y."/>
            <person name="Suzuki O."/>
            <person name="Nakagawa S."/>
            <person name="Senoh A."/>
            <person name="Mizoguchi H."/>
            <person name="Goto Y."/>
            <person name="Shimizu F."/>
            <person name="Wakebe H."/>
            <person name="Hishigaki H."/>
            <person name="Watanabe T."/>
            <person name="Sugiyama A."/>
            <person name="Takemoto M."/>
            <person name="Kawakami B."/>
            <person name="Yamazaki M."/>
            <person name="Watanabe K."/>
            <person name="Kumagai A."/>
            <person name="Itakura S."/>
            <person name="Fukuzumi Y."/>
            <person name="Fujimori Y."/>
            <person name="Komiyama M."/>
            <person name="Tashiro H."/>
            <person name="Tanigami A."/>
            <person name="Fujiwara T."/>
            <person name="Ono T."/>
            <person name="Yamada K."/>
            <person name="Fujii Y."/>
            <person name="Ozaki K."/>
            <person name="Hirao M."/>
            <person name="Ohmori Y."/>
            <person name="Kawabata A."/>
            <person name="Hikiji T."/>
            <person name="Kobatake N."/>
            <person name="Inagaki H."/>
            <person name="Ikema Y."/>
            <person name="Okamoto S."/>
            <person name="Okitani R."/>
            <person name="Kawakami T."/>
            <person name="Noguchi S."/>
            <person name="Itoh T."/>
            <person name="Shigeta K."/>
            <person name="Senba T."/>
            <person name="Matsumura K."/>
            <person name="Nakajima Y."/>
            <person name="Mizuno T."/>
            <person name="Morinaga M."/>
            <person name="Sasaki M."/>
            <person name="Togashi T."/>
            <person name="Oyama M."/>
            <person name="Hata H."/>
            <person name="Watanabe M."/>
            <person name="Komatsu T."/>
            <person name="Mizushima-Sugano J."/>
            <person name="Satoh T."/>
            <person name="Shirai Y."/>
            <person name="Takahashi Y."/>
            <person name="Nakagawa K."/>
            <person name="Okumura K."/>
            <person name="Nagase T."/>
            <person name="Nomura N."/>
            <person name="Kikuchi H."/>
            <person name="Masuho Y."/>
            <person name="Yamashita R."/>
            <person name="Nakai K."/>
            <person name="Yada T."/>
            <person name="Nakamura Y."/>
            <person name="Ohara O."/>
            <person name="Isogai T."/>
            <person name="Sugano S."/>
        </authorList>
    </citation>
    <scope>NUCLEOTIDE SEQUENCE [LARGE SCALE MRNA]</scope>
    <source>
        <tissue>Small intestine</tissue>
    </source>
</reference>
<reference key="3">
    <citation type="journal article" date="2004" name="Genome Res.">
        <title>The status, quality, and expansion of the NIH full-length cDNA project: the Mammalian Gene Collection (MGC).</title>
        <authorList>
            <consortium name="The MGC Project Team"/>
        </authorList>
    </citation>
    <scope>NUCLEOTIDE SEQUENCE [LARGE SCALE MRNA]</scope>
    <source>
        <tissue>Pancreas</tissue>
        <tissue>Placenta</tissue>
    </source>
</reference>
<reference key="4">
    <citation type="journal article" date="2008" name="J. Proteome Res.">
        <title>Phosphoproteome of resting human platelets.</title>
        <authorList>
            <person name="Zahedi R.P."/>
            <person name="Lewandrowski U."/>
            <person name="Wiesner J."/>
            <person name="Wortelkamp S."/>
            <person name="Moebius J."/>
            <person name="Schuetz C."/>
            <person name="Walter U."/>
            <person name="Gambaryan S."/>
            <person name="Sickmann A."/>
        </authorList>
    </citation>
    <scope>PHOSPHORYLATION [LARGE SCALE ANALYSIS] AT SER-410</scope>
    <scope>IDENTIFICATION BY MASS SPECTROMETRY [LARGE SCALE ANALYSIS]</scope>
    <source>
        <tissue>Platelet</tissue>
    </source>
</reference>
<reference key="5">
    <citation type="journal article" date="2011" name="BMC Syst. Biol.">
        <title>Initial characterization of the human central proteome.</title>
        <authorList>
            <person name="Burkard T.R."/>
            <person name="Planyavsky M."/>
            <person name="Kaupe I."/>
            <person name="Breitwieser F.P."/>
            <person name="Buerckstuemmer T."/>
            <person name="Bennett K.L."/>
            <person name="Superti-Furga G."/>
            <person name="Colinge J."/>
        </authorList>
    </citation>
    <scope>IDENTIFICATION BY MASS SPECTROMETRY [LARGE SCALE ANALYSIS]</scope>
</reference>
<reference key="6">
    <citation type="journal article" date="2014" name="J. Proteomics">
        <title>An enzyme assisted RP-RPLC approach for in-depth analysis of human liver phosphoproteome.</title>
        <authorList>
            <person name="Bian Y."/>
            <person name="Song C."/>
            <person name="Cheng K."/>
            <person name="Dong M."/>
            <person name="Wang F."/>
            <person name="Huang J."/>
            <person name="Sun D."/>
            <person name="Wang L."/>
            <person name="Ye M."/>
            <person name="Zou H."/>
        </authorList>
    </citation>
    <scope>IDENTIFICATION BY MASS SPECTROMETRY [LARGE SCALE ANALYSIS]</scope>
    <source>
        <tissue>Liver</tissue>
    </source>
</reference>
<reference key="7">
    <citation type="journal article" date="2015" name="Eur. J. Hum. Genet.">
        <title>Missense variant in CCDC22 causes X-linked recessive intellectual disability with features of Ritscher-Schinzel/3C syndrome.</title>
        <authorList>
            <person name="Kolanczyk M."/>
            <person name="Krawitz P."/>
            <person name="Hecht J."/>
            <person name="Hupalowska A."/>
            <person name="Miaczynska M."/>
            <person name="Marschner K."/>
            <person name="Schlack C."/>
            <person name="Emmerich D."/>
            <person name="Kobus K."/>
            <person name="Kornak U."/>
            <person name="Robinson P.N."/>
            <person name="Plecko B."/>
            <person name="Grangl G."/>
            <person name="Uhrig S."/>
            <person name="Mundlos S."/>
            <person name="Horn D."/>
        </authorList>
    </citation>
    <scope>INVOLVEMENT IN RTSC2</scope>
    <scope>VARIANT RTSC2 CYS-557</scope>
</reference>
<reference key="8">
    <citation type="journal article" date="2012" name="Mol. Psychiatry">
        <title>CCDC22: a novel candidate gene for syndromic X-linked intellectual disability.</title>
        <authorList>
            <person name="Voineagu I."/>
            <person name="Huang L."/>
            <person name="Winden K."/>
            <person name="Lazaro M."/>
            <person name="Haan E."/>
            <person name="Nelson J."/>
            <person name="McGaughran J."/>
            <person name="Nguyen L.S."/>
            <person name="Friend K."/>
            <person name="Hackett A."/>
            <person name="Field M."/>
            <person name="Gecz J."/>
            <person name="Geschwind D."/>
        </authorList>
    </citation>
    <scope>INVOLVEMENT IN RTSC2</scope>
    <scope>VARIANT RTSC2 ALA-17</scope>
    <scope>TISSUE SPECIFICITY</scope>
</reference>
<reference key="9">
    <citation type="journal article" date="2013" name="J. Clin. Invest.">
        <title>CCDC22 deficiency in humans blunts activation of proinflammatory NF-kappaB signaling.</title>
        <authorList>
            <person name="Starokadomskyy P."/>
            <person name="Gluck N."/>
            <person name="Li H."/>
            <person name="Chen B."/>
            <person name="Wallis M."/>
            <person name="Maine G.N."/>
            <person name="Mao X."/>
            <person name="Zaidi I.W."/>
            <person name="Hein M.Y."/>
            <person name="McDonald F.J."/>
            <person name="Lenzner S."/>
            <person name="Zecha A."/>
            <person name="Ropers H.H."/>
            <person name="Kuss A.W."/>
            <person name="McGaughran J."/>
            <person name="Gecz J."/>
            <person name="Burstein E."/>
        </authorList>
    </citation>
    <scope>FUNCTION</scope>
    <scope>SUBUNIT</scope>
    <scope>CHARACTERIZATION OF VARIANT RTSC2 ALA-17</scope>
</reference>
<reference key="10">
    <citation type="journal article" date="2015" name="Cell">
        <title>A Dynamic Protein Interaction Landscape of the Human Centrosome-Cilium Interface.</title>
        <authorList>
            <person name="Gupta G.D."/>
            <person name="Coyaud E."/>
            <person name="Goncalves J."/>
            <person name="Mojarad B.A."/>
            <person name="Liu Y."/>
            <person name="Wu Q."/>
            <person name="Gheiratmand L."/>
            <person name="Comartin D."/>
            <person name="Tkach J.M."/>
            <person name="Cheung S.W."/>
            <person name="Bashkurov M."/>
            <person name="Hasegan M."/>
            <person name="Knight J.D."/>
            <person name="Lin Z.Y."/>
            <person name="Schueler M."/>
            <person name="Hildebrandt F."/>
            <person name="Moffat J."/>
            <person name="Gingras A.C."/>
            <person name="Raught B."/>
            <person name="Pelletier L."/>
        </authorList>
    </citation>
    <scope>SUBCELLULAR LOCATION</scope>
</reference>
<reference key="11">
    <citation type="journal article" date="2015" name="Mol. Biol. Cell">
        <title>COMMD1 is linked to the WASH complex and regulates endosomal trafficking of the copper transporter ATP7A.</title>
        <authorList>
            <person name="Phillips-Krawczak C.A."/>
            <person name="Singla A."/>
            <person name="Starokadomskyy P."/>
            <person name="Deng Z."/>
            <person name="Osborne D.G."/>
            <person name="Li H."/>
            <person name="Dick C.J."/>
            <person name="Gomez T.S."/>
            <person name="Koenecke M."/>
            <person name="Zhang J.S."/>
            <person name="Dai H."/>
            <person name="Sifuentes-Dominguez L.F."/>
            <person name="Geng L.N."/>
            <person name="Kaufmann S.H."/>
            <person name="Hein M.Y."/>
            <person name="Wallis M."/>
            <person name="McGaughran J."/>
            <person name="Gecz J."/>
            <person name="van de Sluis B."/>
            <person name="Billadeau D.D."/>
            <person name="Burstein E."/>
        </authorList>
    </citation>
    <scope>FUNCTION</scope>
    <scope>IDENTIFICATION IN THE CCC COMPLEX</scope>
    <scope>SUBCELLULAR LOCATION</scope>
    <scope>SUBUNIT</scope>
</reference>
<reference key="12">
    <citation type="journal article" date="2015" name="Proteomics">
        <title>N-terminome analysis of the human mitochondrial proteome.</title>
        <authorList>
            <person name="Vaca Jacome A.S."/>
            <person name="Rabilloud T."/>
            <person name="Schaeffer-Reiss C."/>
            <person name="Rompais M."/>
            <person name="Ayoub D."/>
            <person name="Lane L."/>
            <person name="Bairoch A."/>
            <person name="Van Dorsselaer A."/>
            <person name="Carapito C."/>
        </authorList>
    </citation>
    <scope>IDENTIFICATION BY MASS SPECTROMETRY [LARGE SCALE ANALYSIS]</scope>
</reference>
<reference key="13">
    <citation type="journal article" date="2017" name="Nat. Cell Biol.">
        <title>Retriever is a multiprotein complex for retromer-independent endosomal cargo recycling.</title>
        <authorList>
            <person name="McNally K.E."/>
            <person name="Faulkner R."/>
            <person name="Steinberg F."/>
            <person name="Gallon M."/>
            <person name="Ghai R."/>
            <person name="Pim D."/>
            <person name="Langton P."/>
            <person name="Pearson N."/>
            <person name="Danson C.M."/>
            <person name="Naegele H."/>
            <person name="Morris L.L."/>
            <person name="Singla A."/>
            <person name="Overlee B.L."/>
            <person name="Heesom K.J."/>
            <person name="Sessions R."/>
            <person name="Banks L."/>
            <person name="Collins B.M."/>
            <person name="Berger I."/>
            <person name="Billadeau D.D."/>
            <person name="Burstein E."/>
            <person name="Cullen P.J."/>
        </authorList>
    </citation>
    <scope>FUNCTION</scope>
    <scope>INTERACTION WITH CCDC93; COMMD1; COMMD2; COMMD8; COMMD9; SNX17; SNX31 AND VPS35L</scope>
    <scope>SUBCELLULAR LOCATION</scope>
    <scope>FUNCTION (MICROBIAL INFECTION)</scope>
</reference>
<reference key="14">
    <citation type="journal article" date="2012" name="Transl. Psychiatry">
        <title>Analysis of the chromosome X exome in patients with autism spectrum disorders identified novel candidate genes, including TMLHE.</title>
        <authorList>
            <person name="Nava C."/>
            <person name="Lamari F."/>
            <person name="Heron D."/>
            <person name="Mignot C."/>
            <person name="Rastetter A."/>
            <person name="Keren B."/>
            <person name="Cohen D."/>
            <person name="Faudet A."/>
            <person name="Bouteiller D."/>
            <person name="Gilleron M."/>
            <person name="Jacquette A."/>
            <person name="Whalen S."/>
            <person name="Afenjar A."/>
            <person name="Perisse D."/>
            <person name="Laurent C."/>
            <person name="Dupuits C."/>
            <person name="Gautier C."/>
            <person name="Gerard M."/>
            <person name="Huguet G."/>
            <person name="Caillet S."/>
            <person name="Leheup B."/>
            <person name="Leboyer M."/>
            <person name="Gillberg C."/>
            <person name="Delorme R."/>
            <person name="Bourgeron T."/>
            <person name="Brice A."/>
            <person name="Depienne C."/>
        </authorList>
    </citation>
    <scope>VARIANT ASN-546</scope>
</reference>
<reference evidence="14" key="15">
    <citation type="journal article" date="2023" name="Cell">
        <title>Structure of the endosomal commander complex linked to Ritscher-Schinzel syndrome.</title>
        <authorList>
            <person name="Healy M.D."/>
            <person name="McNally K.E."/>
            <person name="Butkovic R."/>
            <person name="Chilton M."/>
            <person name="Kato K."/>
            <person name="Sacharz J."/>
            <person name="McConville C."/>
            <person name="Moody E.R.R."/>
            <person name="Shaw S."/>
            <person name="Planelles-Herrero V.J."/>
            <person name="Yadav S.K.N."/>
            <person name="Ross J."/>
            <person name="Borucu U."/>
            <person name="Palmer C.S."/>
            <person name="Chen K.E."/>
            <person name="Croll T.I."/>
            <person name="Hall R.J."/>
            <person name="Caruana N.J."/>
            <person name="Ghai R."/>
            <person name="Nguyen T.H.D."/>
            <person name="Heesom K.J."/>
            <person name="Saitoh S."/>
            <person name="Berger I."/>
            <person name="Schaffitzel C."/>
            <person name="Williams T.A."/>
            <person name="Stroud D.A."/>
            <person name="Derivery E."/>
            <person name="Collins B.M."/>
            <person name="Cullen P.J."/>
        </authorList>
    </citation>
    <scope>STRUCTURE BY ELECTRON MICROSCOPY (3.53 ANGSTROMS) OF THE CCC COMPLEX</scope>
    <scope>FUNCTION</scope>
    <scope>SUBUNIT</scope>
    <scope>INTERACTION WITH DENND10</scope>
</reference>
<reference evidence="15 16 17" key="16">
    <citation type="journal article" date="2024" name="Nat. Struct. Mol. Biol.">
        <title>Structure and interactions of the endogenous human commander complex.</title>
        <authorList>
            <person name="Laulumaa S."/>
            <person name="Kumpula E.P."/>
            <person name="Huiskonen J.T."/>
            <person name="Varjosalo M."/>
        </authorList>
    </citation>
    <scope>STRUCTURE BY ELECTRON MICROSCOPY (2.90 ANGSTROMS) IN COMPLEXES WITH THE CCC COMPLEX; THE RETRIEVER COMPLEX; CCDC93 AND DENND10</scope>
    <scope>FUNCTION</scope>
    <scope>SUBUNIT</scope>
    <scope>INTERACTION WITH DENND10</scope>
    <scope>COILED COIL</scope>
</reference>
<sequence>MEEADRILIHSLRQAGTAVPPDVQTLRAFTTELVVEAVVRCLRVINPAVGSGLSPLLPLAMSARFRLAMSLAQACMDLGYPLELGYQNFLYPSEPDLRDLLLFLAERLPTDASEDADQPAGDSAILLRAIGSQIRDQLALPWVPPHLRTPKLQHLQGSALQKPFHASRLVVPELSSRGEPREFQASPLLLPVPTQVPQPVGRVASLLEHHALQLCQQTGRDRPGDEDWVHRTSRLPPQEDTRAQRQRLQKQLTEHLRQSWGLLGAPIQARDLGELLQAWGAGAKTGAPKGSRFTHSEKFTFHLEPQAQATQVSDVPATSRRPEQVTWAAQEQELESLREQLEGVNRSIEEVEADMKTLGVSFVQAESECRHSKLSTAEREQALRLKSRAVELLPDGTANLAKLQLVVENSAQRVIHLAGQWEKHRVPLLAEYRHLRKLQDCRELESSRRLAEIQELHQSVRAAAEEARRKEEVYKQLMSELETLPRDVSRLAYTQRILEIVGNIRKQKEEITKILSDTKELQKEINSLSGKLDRTFAVTDELVFKDAKKDDAVRKAYKYLAALHENCSQLIQTIEDTGTIMREVRDLEEQIETELGKKTLSNLEKIREDYRALRQENAGLLGRVREA</sequence>
<keyword id="KW-0002">3D-structure</keyword>
<keyword id="KW-0175">Coiled coil</keyword>
<keyword id="KW-0963">Cytoplasm</keyword>
<keyword id="KW-0206">Cytoskeleton</keyword>
<keyword id="KW-0225">Disease variant</keyword>
<keyword id="KW-0967">Endosome</keyword>
<keyword id="KW-0991">Intellectual disability</keyword>
<keyword id="KW-0597">Phosphoprotein</keyword>
<keyword id="KW-0653">Protein transport</keyword>
<keyword id="KW-1267">Proteomics identification</keyword>
<keyword id="KW-1185">Reference proteome</keyword>
<keyword id="KW-0813">Transport</keyword>
<keyword id="KW-0833">Ubl conjugation pathway</keyword>
<organism>
    <name type="scientific">Homo sapiens</name>
    <name type="common">Human</name>
    <dbReference type="NCBI Taxonomy" id="9606"/>
    <lineage>
        <taxon>Eukaryota</taxon>
        <taxon>Metazoa</taxon>
        <taxon>Chordata</taxon>
        <taxon>Craniata</taxon>
        <taxon>Vertebrata</taxon>
        <taxon>Euteleostomi</taxon>
        <taxon>Mammalia</taxon>
        <taxon>Eutheria</taxon>
        <taxon>Euarchontoglires</taxon>
        <taxon>Primates</taxon>
        <taxon>Haplorrhini</taxon>
        <taxon>Catarrhini</taxon>
        <taxon>Hominidae</taxon>
        <taxon>Homo</taxon>
    </lineage>
</organism>